<organism>
    <name type="scientific">Arabidopsis thaliana</name>
    <name type="common">Mouse-ear cress</name>
    <dbReference type="NCBI Taxonomy" id="3702"/>
    <lineage>
        <taxon>Eukaryota</taxon>
        <taxon>Viridiplantae</taxon>
        <taxon>Streptophyta</taxon>
        <taxon>Embryophyta</taxon>
        <taxon>Tracheophyta</taxon>
        <taxon>Spermatophyta</taxon>
        <taxon>Magnoliopsida</taxon>
        <taxon>eudicotyledons</taxon>
        <taxon>Gunneridae</taxon>
        <taxon>Pentapetalae</taxon>
        <taxon>rosids</taxon>
        <taxon>malvids</taxon>
        <taxon>Brassicales</taxon>
        <taxon>Brassicaceae</taxon>
        <taxon>Camelineae</taxon>
        <taxon>Arabidopsis</taxon>
    </lineage>
</organism>
<feature type="chain" id="PRO_0000364437" description="Protein FIZZY-RELATED 3">
    <location>
        <begin position="1"/>
        <end position="481"/>
    </location>
</feature>
<feature type="repeat" description="WD 1">
    <location>
        <begin position="172"/>
        <end position="209"/>
    </location>
</feature>
<feature type="repeat" description="WD 2">
    <location>
        <begin position="213"/>
        <end position="252"/>
    </location>
</feature>
<feature type="repeat" description="WD 3">
    <location>
        <begin position="255"/>
        <end position="292"/>
    </location>
</feature>
<feature type="repeat" description="WD 4">
    <location>
        <begin position="296"/>
        <end position="335"/>
    </location>
</feature>
<feature type="repeat" description="WD 5">
    <location>
        <begin position="338"/>
        <end position="380"/>
    </location>
</feature>
<feature type="repeat" description="WD 6">
    <location>
        <begin position="382"/>
        <end position="423"/>
    </location>
</feature>
<feature type="repeat" description="WD 7">
    <location>
        <begin position="426"/>
        <end position="465"/>
    </location>
</feature>
<feature type="region of interest" description="Disordered" evidence="1">
    <location>
        <begin position="100"/>
        <end position="165"/>
    </location>
</feature>
<feature type="compositionally biased region" description="Low complexity" evidence="1">
    <location>
        <begin position="125"/>
        <end position="136"/>
    </location>
</feature>
<feature type="compositionally biased region" description="Basic residues" evidence="1">
    <location>
        <begin position="154"/>
        <end position="163"/>
    </location>
</feature>
<reference key="1">
    <citation type="journal article" date="1997" name="DNA Res.">
        <title>Structural analysis of Arabidopsis thaliana chromosome 5. I. Sequence features of the 1.6 Mb regions covered by twenty physically assigned P1 clones.</title>
        <authorList>
            <person name="Sato S."/>
            <person name="Kotani H."/>
            <person name="Nakamura Y."/>
            <person name="Kaneko T."/>
            <person name="Asamizu E."/>
            <person name="Fukami M."/>
            <person name="Miyajima N."/>
            <person name="Tabata S."/>
        </authorList>
    </citation>
    <scope>NUCLEOTIDE SEQUENCE [LARGE SCALE GENOMIC DNA]</scope>
    <source>
        <strain>cv. Columbia</strain>
    </source>
</reference>
<reference key="2">
    <citation type="journal article" date="2017" name="Plant J.">
        <title>Araport11: a complete reannotation of the Arabidopsis thaliana reference genome.</title>
        <authorList>
            <person name="Cheng C.Y."/>
            <person name="Krishnakumar V."/>
            <person name="Chan A.P."/>
            <person name="Thibaud-Nissen F."/>
            <person name="Schobel S."/>
            <person name="Town C.D."/>
        </authorList>
    </citation>
    <scope>GENOME REANNOTATION</scope>
    <source>
        <strain>cv. Columbia</strain>
    </source>
</reference>
<reference key="3">
    <citation type="journal article" date="2003" name="Science">
        <title>Empirical analysis of transcriptional activity in the Arabidopsis genome.</title>
        <authorList>
            <person name="Yamada K."/>
            <person name="Lim J."/>
            <person name="Dale J.M."/>
            <person name="Chen H."/>
            <person name="Shinn P."/>
            <person name="Palm C.J."/>
            <person name="Southwick A.M."/>
            <person name="Wu H.C."/>
            <person name="Kim C.J."/>
            <person name="Nguyen M."/>
            <person name="Pham P.K."/>
            <person name="Cheuk R.F."/>
            <person name="Karlin-Newmann G."/>
            <person name="Liu S.X."/>
            <person name="Lam B."/>
            <person name="Sakano H."/>
            <person name="Wu T."/>
            <person name="Yu G."/>
            <person name="Miranda M."/>
            <person name="Quach H.L."/>
            <person name="Tripp M."/>
            <person name="Chang C.H."/>
            <person name="Lee J.M."/>
            <person name="Toriumi M.J."/>
            <person name="Chan M.M."/>
            <person name="Tang C.C."/>
            <person name="Onodera C.S."/>
            <person name="Deng J.M."/>
            <person name="Akiyama K."/>
            <person name="Ansari Y."/>
            <person name="Arakawa T."/>
            <person name="Banh J."/>
            <person name="Banno F."/>
            <person name="Bowser L."/>
            <person name="Brooks S.Y."/>
            <person name="Carninci P."/>
            <person name="Chao Q."/>
            <person name="Choy N."/>
            <person name="Enju A."/>
            <person name="Goldsmith A.D."/>
            <person name="Gurjal M."/>
            <person name="Hansen N.F."/>
            <person name="Hayashizaki Y."/>
            <person name="Johnson-Hopson C."/>
            <person name="Hsuan V.W."/>
            <person name="Iida K."/>
            <person name="Karnes M."/>
            <person name="Khan S."/>
            <person name="Koesema E."/>
            <person name="Ishida J."/>
            <person name="Jiang P.X."/>
            <person name="Jones T."/>
            <person name="Kawai J."/>
            <person name="Kamiya A."/>
            <person name="Meyers C."/>
            <person name="Nakajima M."/>
            <person name="Narusaka M."/>
            <person name="Seki M."/>
            <person name="Sakurai T."/>
            <person name="Satou M."/>
            <person name="Tamse R."/>
            <person name="Vaysberg M."/>
            <person name="Wallender E.K."/>
            <person name="Wong C."/>
            <person name="Yamamura Y."/>
            <person name="Yuan S."/>
            <person name="Shinozaki K."/>
            <person name="Davis R.W."/>
            <person name="Theologis A."/>
            <person name="Ecker J.R."/>
        </authorList>
    </citation>
    <scope>NUCLEOTIDE SEQUENCE [LARGE SCALE MRNA]</scope>
    <source>
        <strain>cv. Columbia</strain>
    </source>
</reference>
<reference key="4">
    <citation type="journal article" date="2003" name="Trends Plant Sci.">
        <title>First glance at the plant APC/C, a highly conserved ubiquitin-protein ligase.</title>
        <authorList>
            <person name="Capron A."/>
            <person name="Okresz L."/>
            <person name="Genschik P."/>
        </authorList>
    </citation>
    <scope>REVIEW</scope>
</reference>
<reference key="5">
    <citation type="journal article" date="2005" name="Cell Cycle">
        <title>Arabidopsis anaphase-promoting complexes: multiple activators and wide range of substrates might keep APC perpetually busy.</title>
        <authorList>
            <person name="Fueloep K."/>
            <person name="Tarayre S."/>
            <person name="Kelemen Z."/>
            <person name="Horvath G."/>
            <person name="Kevei Z."/>
            <person name="Nikovics K."/>
            <person name="Bako L."/>
            <person name="Brown S."/>
            <person name="Kondorosi A."/>
            <person name="Kondorosi E."/>
        </authorList>
    </citation>
    <scope>FUNCTION</scope>
    <scope>DEVELOPMENTAL STAGE</scope>
    <scope>ASSOCIATION WITH THE APC/C COMPLEX</scope>
    <scope>INTERACTION WITH CYCA1-1; CYCA3-4; CYCB1-1 AND CYCB1-2</scope>
</reference>
<reference key="6">
    <citation type="journal article" date="2010" name="BMC Plant Biol.">
        <title>Genomic evolution and complexity of the Anaphase-promoting Complex (APC) in land plants.</title>
        <authorList>
            <person name="Lima M.D.F."/>
            <person name="Eloy N.B."/>
            <person name="Pegoraro C."/>
            <person name="Sagit R."/>
            <person name="Rojas C."/>
            <person name="Bretz T."/>
            <person name="Vargas L."/>
            <person name="Elofsson A."/>
            <person name="de Oliveira A.C."/>
            <person name="Hemerly A.S."/>
            <person name="Ferreira P.C.G."/>
        </authorList>
    </citation>
    <scope>REVIEW</scope>
    <scope>GENE FAMILY</scope>
</reference>
<reference key="7">
    <citation type="journal article" date="2011" name="Plant Cell">
        <title>GIGAS CELL1, a novel negative regulator of the anaphase-promoting complex/cyclosome, is required for proper mitotic progression and cell fate determination in Arabidopsis.</title>
        <authorList>
            <person name="Iwata E."/>
            <person name="Ikeda S."/>
            <person name="Matsunaga S."/>
            <person name="Kurata M."/>
            <person name="Yoshioka Y."/>
            <person name="Criqui M.-C."/>
            <person name="Genschik P."/>
            <person name="Ito M."/>
        </authorList>
    </citation>
    <scope>INTERACTION WITH GIG1 AND PYM</scope>
</reference>
<reference key="8">
    <citation type="journal article" date="2011" name="PLoS ONE">
        <title>Conserved CDC20 cell cycle functions are carried out by two of the five isoforms in Arabidopsis thaliana.</title>
        <authorList>
            <person name="Kevei Z."/>
            <person name="Baloban M."/>
            <person name="Da Ines O."/>
            <person name="Tiricz H."/>
            <person name="Kroll A."/>
            <person name="Regulski K."/>
            <person name="Mergaert P."/>
            <person name="Kondorosi E."/>
        </authorList>
    </citation>
    <scope>INTERACTION WITH CDC20-1 AND CDC20-2</scope>
</reference>
<reference key="9">
    <citation type="journal article" date="2012" name="PLoS Genet.">
        <title>OSD1 promotes meiotic progression via APC/C inhibition and forms a regulatory network with TDM and CYCA1;2/TAM.</title>
        <authorList>
            <person name="Cromer L."/>
            <person name="Heyman J."/>
            <person name="Touati S."/>
            <person name="Harashima H."/>
            <person name="Araou E."/>
            <person name="Girard C."/>
            <person name="Horlow C."/>
            <person name="Wassmann K."/>
            <person name="Schnittger A."/>
            <person name="De Veylder L."/>
            <person name="Mercier R."/>
        </authorList>
    </citation>
    <scope>INTERACTION WITH GIG1</scope>
</reference>
<protein>
    <recommendedName>
        <fullName>Protein FIZZY-RELATED 3</fullName>
    </recommendedName>
    <alternativeName>
        <fullName>Cell cycle switch protein CCS52B</fullName>
    </alternativeName>
</protein>
<comment type="function">
    <text evidence="2">Activator protein that regulates the ubiquitin ligase activity and substrate specificity of the anaphase promoting complex/cyclosome (APC/C).</text>
</comment>
<comment type="pathway">
    <text>Protein modification; protein ubiquitination.</text>
</comment>
<comment type="subunit">
    <text evidence="2 3 4 5">Associates with the APC/C complex. Interacts with CDC20-1, CDC20-2, CYCA1-1, CYCA3-4, CYCB1-1 and CYCB1-2. Binds to GIG1 and PYM.</text>
</comment>
<comment type="interaction">
    <interactant intactId="EBI-1749341">
        <id>Q8LPL5</id>
    </interactant>
    <interactant intactId="EBI-1668733">
        <id>Q8LGU6</id>
        <label>CDC27B</label>
    </interactant>
    <organismsDiffer>false</organismsDiffer>
    <experiments>2</experiments>
</comment>
<comment type="developmental stage">
    <text evidence="2">Expressed during G2/M and M phases.</text>
</comment>
<comment type="miscellaneous">
    <text>FZR2 controls the induction of early rounds of endoreduplication while the remaining rounds may be mediated by FZR1 and FZR3.</text>
</comment>
<comment type="similarity">
    <text evidence="6">Belongs to the WD repeat CDC20/Fizzy family.</text>
</comment>
<comment type="sequence caution" evidence="6">
    <conflict type="erroneous gene model prediction">
        <sequence resource="EMBL-CDS" id="BAB11112"/>
    </conflict>
</comment>
<comment type="online information" name="Arabidopsis APC/C subunits">
    <link uri="http://personal.rhul.ac.uk/ujba/110/apc/APC.htm"/>
</comment>
<gene>
    <name type="primary">FZR3</name>
    <name type="synonym">CCS52B</name>
    <name type="synonym">CDH1-3</name>
    <name type="ordered locus">At5g13840</name>
    <name type="ORF">MAC12.21</name>
</gene>
<proteinExistence type="evidence at protein level"/>
<evidence type="ECO:0000256" key="1">
    <source>
        <dbReference type="SAM" id="MobiDB-lite"/>
    </source>
</evidence>
<evidence type="ECO:0000269" key="2">
    <source>
    </source>
</evidence>
<evidence type="ECO:0000269" key="3">
    <source>
    </source>
</evidence>
<evidence type="ECO:0000269" key="4">
    <source>
    </source>
</evidence>
<evidence type="ECO:0000269" key="5">
    <source>
    </source>
</evidence>
<evidence type="ECO:0000305" key="6"/>
<sequence length="481" mass="52378">MASPQSTKTGLNLPAGMNQTSLRLETFSSSFRGISSLSSPSKSTCSDRFIPCRSSSRLHAFDLQDKEPTTPVKEGGNEAYSRLLKSELFGSDFASPLLSPAGGQGSASSPMSPCTNMLRFKTDRSNSSPSSPFSPSILGNDNGHSSDSSPPPKPPRKVPKTPHKVLDAPSLQDDFYLNVVDWSSQNVLAVGLGTCVYLWTASNSKVTKLCDLGPNDSVCSVQWTREGSYISIGTSHGQVQVWDGTQCKRVRTMGGHQTRTGVLAWNSRILSSGSRDRNILQHDIRVQSDFVSKLVGHKSEVCGLKWSHDDRELASGGNDNQLLVWNNHSQQPILKLTEHTAAVKAITWSPHQSSLLASGGGTADRCIRFWNTTNGNQLNSIDTGSQVCNLAWSKNVNEIVSTHGYSQNQIMLWKYPSMSKVATLTGHSMRVLYLATSPDGQTIVTGAGDETLRFWNVFPSVKMQTPVKDTGLWSLGRTQIR</sequence>
<accession>Q8LPL5</accession>
<accession>Q9FFY8</accession>
<name>FZR3_ARATH</name>
<keyword id="KW-0131">Cell cycle</keyword>
<keyword id="KW-0132">Cell division</keyword>
<keyword id="KW-0498">Mitosis</keyword>
<keyword id="KW-1185">Reference proteome</keyword>
<keyword id="KW-0677">Repeat</keyword>
<keyword id="KW-0833">Ubl conjugation pathway</keyword>
<keyword id="KW-0853">WD repeat</keyword>
<dbReference type="EMBL" id="AB005230">
    <property type="protein sequence ID" value="BAB11112.1"/>
    <property type="status" value="ALT_SEQ"/>
    <property type="molecule type" value="Genomic_DNA"/>
</dbReference>
<dbReference type="EMBL" id="CP002688">
    <property type="protein sequence ID" value="AED91948.1"/>
    <property type="molecule type" value="Genomic_DNA"/>
</dbReference>
<dbReference type="EMBL" id="CP002688">
    <property type="protein sequence ID" value="AED91949.1"/>
    <property type="molecule type" value="Genomic_DNA"/>
</dbReference>
<dbReference type="EMBL" id="AY099581">
    <property type="protein sequence ID" value="AAM20433.1"/>
    <property type="molecule type" value="mRNA"/>
</dbReference>
<dbReference type="EMBL" id="BT002165">
    <property type="protein sequence ID" value="AAN72176.1"/>
    <property type="molecule type" value="mRNA"/>
</dbReference>
<dbReference type="RefSeq" id="NP_001190305.1">
    <property type="nucleotide sequence ID" value="NM_001203376.1"/>
</dbReference>
<dbReference type="RefSeq" id="NP_196888.2">
    <property type="nucleotide sequence ID" value="NM_121387.4"/>
</dbReference>
<dbReference type="SMR" id="Q8LPL5"/>
<dbReference type="BioGRID" id="16508">
    <property type="interactions" value="32"/>
</dbReference>
<dbReference type="ELM" id="Q8LPL5"/>
<dbReference type="FunCoup" id="Q8LPL5">
    <property type="interactions" value="3264"/>
</dbReference>
<dbReference type="IntAct" id="Q8LPL5">
    <property type="interactions" value="24"/>
</dbReference>
<dbReference type="STRING" id="3702.Q8LPL5"/>
<dbReference type="PaxDb" id="3702-AT5G13840.1"/>
<dbReference type="ProteomicsDB" id="248555"/>
<dbReference type="EnsemblPlants" id="AT5G13840.1">
    <property type="protein sequence ID" value="AT5G13840.1"/>
    <property type="gene ID" value="AT5G13840"/>
</dbReference>
<dbReference type="EnsemblPlants" id="AT5G13840.2">
    <property type="protein sequence ID" value="AT5G13840.2"/>
    <property type="gene ID" value="AT5G13840"/>
</dbReference>
<dbReference type="GeneID" id="831230"/>
<dbReference type="Gramene" id="AT5G13840.1">
    <property type="protein sequence ID" value="AT5G13840.1"/>
    <property type="gene ID" value="AT5G13840"/>
</dbReference>
<dbReference type="Gramene" id="AT5G13840.2">
    <property type="protein sequence ID" value="AT5G13840.2"/>
    <property type="gene ID" value="AT5G13840"/>
</dbReference>
<dbReference type="KEGG" id="ath:AT5G13840"/>
<dbReference type="Araport" id="AT5G13840"/>
<dbReference type="TAIR" id="AT5G13840">
    <property type="gene designation" value="FZR3"/>
</dbReference>
<dbReference type="eggNOG" id="KOG0305">
    <property type="taxonomic scope" value="Eukaryota"/>
</dbReference>
<dbReference type="HOGENOM" id="CLU_014831_4_2_1"/>
<dbReference type="InParanoid" id="Q8LPL5"/>
<dbReference type="OMA" id="FHHEYEK"/>
<dbReference type="PhylomeDB" id="Q8LPL5"/>
<dbReference type="UniPathway" id="UPA00143"/>
<dbReference type="PRO" id="PR:Q8LPL5"/>
<dbReference type="Proteomes" id="UP000006548">
    <property type="component" value="Chromosome 5"/>
</dbReference>
<dbReference type="ExpressionAtlas" id="Q8LPL5">
    <property type="expression patterns" value="baseline and differential"/>
</dbReference>
<dbReference type="GO" id="GO:0010997">
    <property type="term" value="F:anaphase-promoting complex binding"/>
    <property type="evidence" value="ECO:0007669"/>
    <property type="project" value="InterPro"/>
</dbReference>
<dbReference type="GO" id="GO:0097027">
    <property type="term" value="F:ubiquitin-protein transferase activator activity"/>
    <property type="evidence" value="ECO:0007669"/>
    <property type="project" value="InterPro"/>
</dbReference>
<dbReference type="GO" id="GO:0051301">
    <property type="term" value="P:cell division"/>
    <property type="evidence" value="ECO:0007669"/>
    <property type="project" value="UniProtKB-KW"/>
</dbReference>
<dbReference type="GO" id="GO:0016567">
    <property type="term" value="P:protein ubiquitination"/>
    <property type="evidence" value="ECO:0007669"/>
    <property type="project" value="UniProtKB-UniPathway"/>
</dbReference>
<dbReference type="CDD" id="cd00200">
    <property type="entry name" value="WD40"/>
    <property type="match status" value="1"/>
</dbReference>
<dbReference type="FunFam" id="2.130.10.10:FF:000025">
    <property type="entry name" value="FIZZY-related 2 isoform 1"/>
    <property type="match status" value="1"/>
</dbReference>
<dbReference type="Gene3D" id="2.130.10.10">
    <property type="entry name" value="YVTN repeat-like/Quinoprotein amine dehydrogenase"/>
    <property type="match status" value="1"/>
</dbReference>
<dbReference type="InterPro" id="IPR033010">
    <property type="entry name" value="Cdc20/Fizzy"/>
</dbReference>
<dbReference type="InterPro" id="IPR015943">
    <property type="entry name" value="WD40/YVTN_repeat-like_dom_sf"/>
</dbReference>
<dbReference type="InterPro" id="IPR056150">
    <property type="entry name" value="WD40_CDC20-Fz"/>
</dbReference>
<dbReference type="InterPro" id="IPR019775">
    <property type="entry name" value="WD40_repeat_CS"/>
</dbReference>
<dbReference type="InterPro" id="IPR036322">
    <property type="entry name" value="WD40_repeat_dom_sf"/>
</dbReference>
<dbReference type="InterPro" id="IPR001680">
    <property type="entry name" value="WD40_rpt"/>
</dbReference>
<dbReference type="PANTHER" id="PTHR19918">
    <property type="entry name" value="CELL DIVISION CYCLE 20 CDC20 FIZZY -RELATED"/>
    <property type="match status" value="1"/>
</dbReference>
<dbReference type="PANTHER" id="PTHR19918:SF36">
    <property type="entry name" value="PROTEIN FIZZY-RELATED 3"/>
    <property type="match status" value="1"/>
</dbReference>
<dbReference type="Pfam" id="PF24807">
    <property type="entry name" value="WD40_CDC20-Fz"/>
    <property type="match status" value="1"/>
</dbReference>
<dbReference type="SMART" id="SM00320">
    <property type="entry name" value="WD40"/>
    <property type="match status" value="7"/>
</dbReference>
<dbReference type="SUPFAM" id="SSF50978">
    <property type="entry name" value="WD40 repeat-like"/>
    <property type="match status" value="1"/>
</dbReference>
<dbReference type="PROSITE" id="PS00678">
    <property type="entry name" value="WD_REPEATS_1"/>
    <property type="match status" value="3"/>
</dbReference>
<dbReference type="PROSITE" id="PS50082">
    <property type="entry name" value="WD_REPEATS_2"/>
    <property type="match status" value="4"/>
</dbReference>
<dbReference type="PROSITE" id="PS50294">
    <property type="entry name" value="WD_REPEATS_REGION"/>
    <property type="match status" value="1"/>
</dbReference>